<dbReference type="EMBL" id="CP000941">
    <property type="protein sequence ID" value="ACA13007.1"/>
    <property type="molecule type" value="Genomic_DNA"/>
</dbReference>
<dbReference type="RefSeq" id="WP_004084652.1">
    <property type="nucleotide sequence ID" value="NC_010513.1"/>
</dbReference>
<dbReference type="SMR" id="B0U5I9"/>
<dbReference type="KEGG" id="xfm:Xfasm12_2151"/>
<dbReference type="HOGENOM" id="CLU_040318_1_2_6"/>
<dbReference type="GO" id="GO:0022627">
    <property type="term" value="C:cytosolic small ribosomal subunit"/>
    <property type="evidence" value="ECO:0007669"/>
    <property type="project" value="TreeGrafter"/>
</dbReference>
<dbReference type="GO" id="GO:0003735">
    <property type="term" value="F:structural constituent of ribosome"/>
    <property type="evidence" value="ECO:0007669"/>
    <property type="project" value="InterPro"/>
</dbReference>
<dbReference type="GO" id="GO:0006412">
    <property type="term" value="P:translation"/>
    <property type="evidence" value="ECO:0007669"/>
    <property type="project" value="UniProtKB-UniRule"/>
</dbReference>
<dbReference type="CDD" id="cd01425">
    <property type="entry name" value="RPS2"/>
    <property type="match status" value="1"/>
</dbReference>
<dbReference type="FunFam" id="1.10.287.610:FF:000001">
    <property type="entry name" value="30S ribosomal protein S2"/>
    <property type="match status" value="1"/>
</dbReference>
<dbReference type="Gene3D" id="3.40.50.10490">
    <property type="entry name" value="Glucose-6-phosphate isomerase like protein, domain 1"/>
    <property type="match status" value="1"/>
</dbReference>
<dbReference type="Gene3D" id="1.10.287.610">
    <property type="entry name" value="Helix hairpin bin"/>
    <property type="match status" value="1"/>
</dbReference>
<dbReference type="HAMAP" id="MF_00291_B">
    <property type="entry name" value="Ribosomal_uS2_B"/>
    <property type="match status" value="1"/>
</dbReference>
<dbReference type="InterPro" id="IPR001865">
    <property type="entry name" value="Ribosomal_uS2"/>
</dbReference>
<dbReference type="InterPro" id="IPR005706">
    <property type="entry name" value="Ribosomal_uS2_bac/mit/plastid"/>
</dbReference>
<dbReference type="InterPro" id="IPR018130">
    <property type="entry name" value="Ribosomal_uS2_CS"/>
</dbReference>
<dbReference type="InterPro" id="IPR023591">
    <property type="entry name" value="Ribosomal_uS2_flav_dom_sf"/>
</dbReference>
<dbReference type="NCBIfam" id="TIGR01011">
    <property type="entry name" value="rpsB_bact"/>
    <property type="match status" value="1"/>
</dbReference>
<dbReference type="PANTHER" id="PTHR12534">
    <property type="entry name" value="30S RIBOSOMAL PROTEIN S2 PROKARYOTIC AND ORGANELLAR"/>
    <property type="match status" value="1"/>
</dbReference>
<dbReference type="PANTHER" id="PTHR12534:SF0">
    <property type="entry name" value="SMALL RIBOSOMAL SUBUNIT PROTEIN US2M"/>
    <property type="match status" value="1"/>
</dbReference>
<dbReference type="Pfam" id="PF00318">
    <property type="entry name" value="Ribosomal_S2"/>
    <property type="match status" value="1"/>
</dbReference>
<dbReference type="PRINTS" id="PR00395">
    <property type="entry name" value="RIBOSOMALS2"/>
</dbReference>
<dbReference type="SUPFAM" id="SSF52313">
    <property type="entry name" value="Ribosomal protein S2"/>
    <property type="match status" value="1"/>
</dbReference>
<dbReference type="PROSITE" id="PS00962">
    <property type="entry name" value="RIBOSOMAL_S2_1"/>
    <property type="match status" value="1"/>
</dbReference>
<dbReference type="PROSITE" id="PS00963">
    <property type="entry name" value="RIBOSOMAL_S2_2"/>
    <property type="match status" value="1"/>
</dbReference>
<proteinExistence type="inferred from homology"/>
<name>RS2_XYLFM</name>
<reference key="1">
    <citation type="journal article" date="2010" name="J. Bacteriol.">
        <title>Whole genome sequences of two Xylella fastidiosa strains (M12 and M23) causing almond leaf scorch disease in California.</title>
        <authorList>
            <person name="Chen J."/>
            <person name="Xie G."/>
            <person name="Han S."/>
            <person name="Chertkov O."/>
            <person name="Sims D."/>
            <person name="Civerolo E.L."/>
        </authorList>
    </citation>
    <scope>NUCLEOTIDE SEQUENCE [LARGE SCALE GENOMIC DNA]</scope>
    <source>
        <strain>M12</strain>
    </source>
</reference>
<protein>
    <recommendedName>
        <fullName evidence="1">Small ribosomal subunit protein uS2</fullName>
    </recommendedName>
    <alternativeName>
        <fullName evidence="3">30S ribosomal protein S2</fullName>
    </alternativeName>
</protein>
<sequence>MPQVTMRQMLEAGVHFGHQTRYRHPKMSPNIFGARGKIHIINLEKTVPLFNDAMNFLSAVAQKRGSVLFVGTKRSARDAIKEEAERCGMPYMIQRWLGGTLTNFRTVKQSVARLKELELAETDGTFSKLVKHEVLRLRRESGKLQASLGGIKDMNRIPDAIFVIDIGHEDIAIKEAKKLGIPVVAVVDTNYDPSLVDYPIPGNDDAIRAVQLYARAAADAVLEGKAAMPNAVAVREEEFASAPDAGKKGRQAQPKKGKRASDAAAE</sequence>
<gene>
    <name evidence="1" type="primary">rpsB</name>
    <name type="ordered locus">Xfasm12_2151</name>
</gene>
<comment type="similarity">
    <text evidence="1">Belongs to the universal ribosomal protein uS2 family.</text>
</comment>
<evidence type="ECO:0000255" key="1">
    <source>
        <dbReference type="HAMAP-Rule" id="MF_00291"/>
    </source>
</evidence>
<evidence type="ECO:0000256" key="2">
    <source>
        <dbReference type="SAM" id="MobiDB-lite"/>
    </source>
</evidence>
<evidence type="ECO:0000305" key="3"/>
<accession>B0U5I9</accession>
<keyword id="KW-0687">Ribonucleoprotein</keyword>
<keyword id="KW-0689">Ribosomal protein</keyword>
<organism>
    <name type="scientific">Xylella fastidiosa (strain M12)</name>
    <dbReference type="NCBI Taxonomy" id="405440"/>
    <lineage>
        <taxon>Bacteria</taxon>
        <taxon>Pseudomonadati</taxon>
        <taxon>Pseudomonadota</taxon>
        <taxon>Gammaproteobacteria</taxon>
        <taxon>Lysobacterales</taxon>
        <taxon>Lysobacteraceae</taxon>
        <taxon>Xylella</taxon>
    </lineage>
</organism>
<feature type="chain" id="PRO_1000115078" description="Small ribosomal subunit protein uS2">
    <location>
        <begin position="1"/>
        <end position="266"/>
    </location>
</feature>
<feature type="region of interest" description="Disordered" evidence="2">
    <location>
        <begin position="238"/>
        <end position="266"/>
    </location>
</feature>
<feature type="compositionally biased region" description="Basic residues" evidence="2">
    <location>
        <begin position="248"/>
        <end position="258"/>
    </location>
</feature>